<reference evidence="6" key="1">
    <citation type="journal article" date="2009" name="ChemBioChem">
        <title>Lasioglossins: three novel antimicrobial peptides from the venom of the eusocial bee Lasioglossum laticeps (Hymenoptera: Halictidae).</title>
        <authorList>
            <person name="Cerovsky V."/>
            <person name="Budesinsky M."/>
            <person name="Hovorka O."/>
            <person name="Cvacka J."/>
            <person name="Voburka Z."/>
            <person name="Slaninova J."/>
            <person name="Borovickova L."/>
            <person name="Fucik V."/>
            <person name="Bednarova L."/>
            <person name="Votruba I."/>
            <person name="Straka J."/>
        </authorList>
    </citation>
    <scope>PROTEIN SEQUENCE</scope>
    <scope>FUNCTION</scope>
    <scope>SUBCELLULAR LOCATION</scope>
    <scope>MASS SPECTROMETRY</scope>
    <scope>IDENTIFICATION BY MASS SPECTROMETRY</scope>
    <scope>STRUCTURE BY NMR</scope>
    <scope>MUTAGENESIS OF 1-VAL-ASN-2 AND GLY-8</scope>
    <scope>AMIDATION AT LYS-15</scope>
    <source>
        <tissue evidence="5">Venom</tissue>
    </source>
</reference>
<reference key="2">
    <citation type="journal article" date="2022" name="Toxins">
        <title>The pharmacological potential of novel melittin variants from the honeybee and solitary bees against inflammation and cancer.</title>
        <authorList>
            <person name="Erkoc P."/>
            <person name="von Reumont B.M."/>
            <person name="Lueddecke T."/>
            <person name="Henke M."/>
            <person name="Ulshoefer T."/>
            <person name="Vilcinskas A."/>
            <person name="Fuerst R."/>
            <person name="Schiffmann S."/>
        </authorList>
    </citation>
    <scope>FUNCTION OF 3-RESIDUES C-TERMINALLY TRUNCATED PEPTIDE</scope>
</reference>
<keyword id="KW-0027">Amidation</keyword>
<keyword id="KW-0044">Antibiotic</keyword>
<keyword id="KW-0929">Antimicrobial</keyword>
<keyword id="KW-0903">Direct protein sequencing</keyword>
<keyword id="KW-0238">DNA-binding</keyword>
<keyword id="KW-0964">Secreted</keyword>
<name>LL1_LASLA</name>
<sequence>VNWKKVLGKIIKVAK</sequence>
<protein>
    <recommendedName>
        <fullName evidence="5">Lasioglossin-1</fullName>
        <shortName evidence="5">LL-I</shortName>
    </recommendedName>
</protein>
<dbReference type="GO" id="GO:0005576">
    <property type="term" value="C:extracellular region"/>
    <property type="evidence" value="ECO:0007669"/>
    <property type="project" value="UniProtKB-SubCell"/>
</dbReference>
<dbReference type="GO" id="GO:0003677">
    <property type="term" value="F:DNA binding"/>
    <property type="evidence" value="ECO:0007669"/>
    <property type="project" value="UniProtKB-KW"/>
</dbReference>
<dbReference type="GO" id="GO:0042742">
    <property type="term" value="P:defense response to bacterium"/>
    <property type="evidence" value="ECO:0007669"/>
    <property type="project" value="UniProtKB-KW"/>
</dbReference>
<proteinExistence type="evidence at protein level"/>
<accession>C0HK42</accession>
<comment type="function">
    <text evidence="1 2 3 4">Antimicrobial peptide which assumes an amphiphilic alpha-helix conformation upon contact with membranes (PubMed:19591185). Insertion into membranes involves Trp-3 (By similarity). Penetrates into cells once membrane has been permeated (By similarity). Active against Gram-negative bacteria (E.coli (MIC=1.7 uM) and P.aeruginosa (MIC=15.8 uM)) and Gram-positive bacteria (S.aureus (MIC=14.3 uM) and B.subtilis (MIC=0.8 uM)) (PubMed:19591185). Has cytotoxic but no hemolytic activity (PubMed:19591185). Binds DNA in vitro (By similarity). In the context of inflammation and cancer tests, a 3-residues C-terminally truncated lasioglossin-1 is weakly cytotoxic to normal cells, induces calcium signaling but does not impact cAMP production (PubMed:36548715). In addition, this truncated peptide prevents LPS-induced nitric oxid (NO) synthesis but does not affect the IP3 signaling and pro-inflammatory activation of endothelial cells (PubMed:36548715). This truncated peptide does not show significant antiproliferative activity on the breast cancer cell line MDA-MB-231 (PubMed:36548715).</text>
</comment>
<comment type="subcellular location">
    <subcellularLocation>
        <location evidence="3">Secreted</location>
    </subcellularLocation>
</comment>
<comment type="tissue specificity">
    <text evidence="7">Expressed by the venom gland.</text>
</comment>
<comment type="PTM">
    <text evidence="2">The C-terminal amidation is required for full activity.</text>
</comment>
<comment type="mass spectrometry"/>
<comment type="similarity">
    <text evidence="6">Belongs to the lasioglossin-like family.</text>
</comment>
<organism evidence="5">
    <name type="scientific">Lasioglossum laticeps</name>
    <name type="common">Bee</name>
    <dbReference type="NCBI Taxonomy" id="88510"/>
    <lineage>
        <taxon>Eukaryota</taxon>
        <taxon>Metazoa</taxon>
        <taxon>Ecdysozoa</taxon>
        <taxon>Arthropoda</taxon>
        <taxon>Hexapoda</taxon>
        <taxon>Insecta</taxon>
        <taxon>Pterygota</taxon>
        <taxon>Neoptera</taxon>
        <taxon>Endopterygota</taxon>
        <taxon>Hymenoptera</taxon>
        <taxon>Apocrita</taxon>
        <taxon>Aculeata</taxon>
        <taxon>Apoidea</taxon>
        <taxon>Anthophila</taxon>
        <taxon>Halictidae</taxon>
        <taxon>Halictinae</taxon>
        <taxon>Halictini</taxon>
        <taxon>Lasioglossum</taxon>
        <taxon>Evylaeus</taxon>
    </lineage>
</organism>
<feature type="peptide" id="PRO_0000437650" description="Lasioglossin-1" evidence="3">
    <location>
        <begin position="1"/>
        <end position="15"/>
    </location>
</feature>
<feature type="modified residue" description="Lysine amide" evidence="3">
    <location>
        <position position="15"/>
    </location>
</feature>
<feature type="mutagenesis site" description="Reduced antimicrobial activity." evidence="3">
    <original>VN</original>
    <variation>NV</variation>
    <location>
        <begin position="1"/>
        <end position="2"/>
    </location>
</feature>
<feature type="mutagenesis site" description="Slightly increased activity against all bacteria except P.aeruginosa." evidence="3">
    <original>G</original>
    <variation>A</variation>
    <location>
        <position position="8"/>
    </location>
</feature>
<feature type="mutagenesis site" description="Slightly increased activity against B.subtilis and E.coli, reduced activity against S.aureus and P.aeruginosa." evidence="3">
    <original>G</original>
    <variation>K</variation>
    <location>
        <position position="8"/>
    </location>
</feature>
<feature type="mutagenesis site" description="Reduced antimicrobial activity." evidence="3">
    <original>G</original>
    <variation>P</variation>
    <location>
        <position position="8"/>
    </location>
</feature>
<evidence type="ECO:0000250" key="1">
    <source>
        <dbReference type="UniProtKB" id="C0HK43"/>
    </source>
</evidence>
<evidence type="ECO:0000250" key="2">
    <source>
        <dbReference type="UniProtKB" id="C0HK44"/>
    </source>
</evidence>
<evidence type="ECO:0000269" key="3">
    <source>
    </source>
</evidence>
<evidence type="ECO:0000269" key="4">
    <source>
    </source>
</evidence>
<evidence type="ECO:0000303" key="5">
    <source>
    </source>
</evidence>
<evidence type="ECO:0000305" key="6"/>
<evidence type="ECO:0000305" key="7">
    <source>
    </source>
</evidence>